<proteinExistence type="inferred from homology"/>
<protein>
    <recommendedName>
        <fullName evidence="1">tRNA N6-adenosine threonylcarbamoyltransferase</fullName>
        <ecNumber evidence="1">2.3.1.234</ecNumber>
    </recommendedName>
    <alternativeName>
        <fullName evidence="1">N6-L-threonylcarbamoyladenine synthase</fullName>
        <shortName evidence="1">t(6)A synthase</shortName>
    </alternativeName>
    <alternativeName>
        <fullName evidence="1">t(6)A37 threonylcarbamoyladenosine biosynthesis protein TsaD</fullName>
    </alternativeName>
    <alternativeName>
        <fullName evidence="1">tRNA threonylcarbamoyladenosine biosynthesis protein TsaD</fullName>
    </alternativeName>
</protein>
<feature type="chain" id="PRO_0000303321" description="tRNA N6-adenosine threonylcarbamoyltransferase">
    <location>
        <begin position="1"/>
        <end position="344"/>
    </location>
</feature>
<feature type="binding site" evidence="1">
    <location>
        <position position="110"/>
    </location>
    <ligand>
        <name>Fe cation</name>
        <dbReference type="ChEBI" id="CHEBI:24875"/>
    </ligand>
</feature>
<feature type="binding site" evidence="1">
    <location>
        <position position="114"/>
    </location>
    <ligand>
        <name>Fe cation</name>
        <dbReference type="ChEBI" id="CHEBI:24875"/>
    </ligand>
</feature>
<feature type="binding site" evidence="1">
    <location>
        <begin position="133"/>
        <end position="137"/>
    </location>
    <ligand>
        <name>substrate</name>
    </ligand>
</feature>
<feature type="binding site" evidence="1">
    <location>
        <position position="166"/>
    </location>
    <ligand>
        <name>substrate</name>
    </ligand>
</feature>
<feature type="binding site" evidence="1">
    <location>
        <position position="179"/>
    </location>
    <ligand>
        <name>substrate</name>
    </ligand>
</feature>
<feature type="binding site" evidence="1">
    <location>
        <position position="278"/>
    </location>
    <ligand>
        <name>substrate</name>
    </ligand>
</feature>
<feature type="binding site" evidence="1">
    <location>
        <position position="303"/>
    </location>
    <ligand>
        <name>Fe cation</name>
        <dbReference type="ChEBI" id="CHEBI:24875"/>
    </ligand>
</feature>
<accession>Q254Q0</accession>
<gene>
    <name evidence="1" type="primary">tsaD</name>
    <name type="synonym">gcp</name>
    <name type="ordered locus">CF0466</name>
</gene>
<sequence length="344" mass="36719">MLTLGLESSCDETACALVDADAQIVANVVSSQQYHASYGGVVPELASRAHLQMLPSVVNSALEKSGVSLDDIDLIAVTHTPGLIGSLAVGVNFAKGLAIGSQKPMIGVNHVEAHLYAAYMEAKNVEFPALGLVMSGAHTSMFLMEDPLSYKLIGNTRDDAIGETFDKVGRFLGLPYPGGALIEMMASQGCEESYPFSAAKVPGYDLSFSGLKTAVLYAIKGNNSNSRSPLPDLSQKEKNNIAASFQKAAFMTIAQKLPKIIKNFSCRSILVGGGVANNKYFQTLLQNTLNLPLYFPSSKLCTDNAAMIAGLGRELFLSRKTTQGITPCARYRWESVADSLSPHP</sequence>
<keyword id="KW-0012">Acyltransferase</keyword>
<keyword id="KW-0963">Cytoplasm</keyword>
<keyword id="KW-0408">Iron</keyword>
<keyword id="KW-0479">Metal-binding</keyword>
<keyword id="KW-0808">Transferase</keyword>
<keyword id="KW-0819">tRNA processing</keyword>
<name>TSAD_CHLFF</name>
<evidence type="ECO:0000255" key="1">
    <source>
        <dbReference type="HAMAP-Rule" id="MF_01445"/>
    </source>
</evidence>
<reference key="1">
    <citation type="journal article" date="2006" name="DNA Res.">
        <title>Genome sequence of the cat pathogen, Chlamydophila felis.</title>
        <authorList>
            <person name="Azuma Y."/>
            <person name="Hirakawa H."/>
            <person name="Yamashita A."/>
            <person name="Cai Y."/>
            <person name="Rahman M.A."/>
            <person name="Suzuki H."/>
            <person name="Mitaku S."/>
            <person name="Toh H."/>
            <person name="Goto S."/>
            <person name="Murakami T."/>
            <person name="Sugi K."/>
            <person name="Hayashi H."/>
            <person name="Fukushi H."/>
            <person name="Hattori M."/>
            <person name="Kuhara S."/>
            <person name="Shirai M."/>
        </authorList>
    </citation>
    <scope>NUCLEOTIDE SEQUENCE [LARGE SCALE GENOMIC DNA]</scope>
    <source>
        <strain>Fe/C-56</strain>
    </source>
</reference>
<organism>
    <name type="scientific">Chlamydia felis (strain Fe/C-56)</name>
    <name type="common">Chlamydophila felis</name>
    <dbReference type="NCBI Taxonomy" id="264202"/>
    <lineage>
        <taxon>Bacteria</taxon>
        <taxon>Pseudomonadati</taxon>
        <taxon>Chlamydiota</taxon>
        <taxon>Chlamydiia</taxon>
        <taxon>Chlamydiales</taxon>
        <taxon>Chlamydiaceae</taxon>
        <taxon>Chlamydia/Chlamydophila group</taxon>
        <taxon>Chlamydia</taxon>
    </lineage>
</organism>
<dbReference type="EC" id="2.3.1.234" evidence="1"/>
<dbReference type="EMBL" id="AP006861">
    <property type="protein sequence ID" value="BAE81238.1"/>
    <property type="molecule type" value="Genomic_DNA"/>
</dbReference>
<dbReference type="RefSeq" id="WP_011458018.1">
    <property type="nucleotide sequence ID" value="NC_007899.1"/>
</dbReference>
<dbReference type="SMR" id="Q254Q0"/>
<dbReference type="STRING" id="264202.CF0466"/>
<dbReference type="KEGG" id="cfe:CF0466"/>
<dbReference type="eggNOG" id="COG0533">
    <property type="taxonomic scope" value="Bacteria"/>
</dbReference>
<dbReference type="HOGENOM" id="CLU_023208_0_2_0"/>
<dbReference type="OrthoDB" id="9806197at2"/>
<dbReference type="Proteomes" id="UP000001260">
    <property type="component" value="Chromosome"/>
</dbReference>
<dbReference type="GO" id="GO:0005737">
    <property type="term" value="C:cytoplasm"/>
    <property type="evidence" value="ECO:0007669"/>
    <property type="project" value="UniProtKB-SubCell"/>
</dbReference>
<dbReference type="GO" id="GO:0005506">
    <property type="term" value="F:iron ion binding"/>
    <property type="evidence" value="ECO:0007669"/>
    <property type="project" value="UniProtKB-UniRule"/>
</dbReference>
<dbReference type="GO" id="GO:0061711">
    <property type="term" value="F:N(6)-L-threonylcarbamoyladenine synthase activity"/>
    <property type="evidence" value="ECO:0007669"/>
    <property type="project" value="UniProtKB-EC"/>
</dbReference>
<dbReference type="GO" id="GO:0002949">
    <property type="term" value="P:tRNA threonylcarbamoyladenosine modification"/>
    <property type="evidence" value="ECO:0007669"/>
    <property type="project" value="UniProtKB-UniRule"/>
</dbReference>
<dbReference type="CDD" id="cd24133">
    <property type="entry name" value="ASKHA_NBD_TsaD_bac"/>
    <property type="match status" value="1"/>
</dbReference>
<dbReference type="FunFam" id="3.30.420.40:FF:000012">
    <property type="entry name" value="tRNA N6-adenosine threonylcarbamoyltransferase"/>
    <property type="match status" value="1"/>
</dbReference>
<dbReference type="Gene3D" id="3.30.420.40">
    <property type="match status" value="2"/>
</dbReference>
<dbReference type="HAMAP" id="MF_01445">
    <property type="entry name" value="TsaD"/>
    <property type="match status" value="1"/>
</dbReference>
<dbReference type="InterPro" id="IPR043129">
    <property type="entry name" value="ATPase_NBD"/>
</dbReference>
<dbReference type="InterPro" id="IPR000905">
    <property type="entry name" value="Gcp-like_dom"/>
</dbReference>
<dbReference type="InterPro" id="IPR017861">
    <property type="entry name" value="KAE1/TsaD"/>
</dbReference>
<dbReference type="InterPro" id="IPR022450">
    <property type="entry name" value="TsaD"/>
</dbReference>
<dbReference type="NCBIfam" id="TIGR00329">
    <property type="entry name" value="gcp_kae1"/>
    <property type="match status" value="1"/>
</dbReference>
<dbReference type="NCBIfam" id="TIGR03723">
    <property type="entry name" value="T6A_TsaD_YgjD"/>
    <property type="match status" value="1"/>
</dbReference>
<dbReference type="PANTHER" id="PTHR11735">
    <property type="entry name" value="TRNA N6-ADENOSINE THREONYLCARBAMOYLTRANSFERASE"/>
    <property type="match status" value="1"/>
</dbReference>
<dbReference type="PANTHER" id="PTHR11735:SF6">
    <property type="entry name" value="TRNA N6-ADENOSINE THREONYLCARBAMOYLTRANSFERASE, MITOCHONDRIAL"/>
    <property type="match status" value="1"/>
</dbReference>
<dbReference type="Pfam" id="PF00814">
    <property type="entry name" value="TsaD"/>
    <property type="match status" value="1"/>
</dbReference>
<dbReference type="PRINTS" id="PR00789">
    <property type="entry name" value="OSIALOPTASE"/>
</dbReference>
<dbReference type="SUPFAM" id="SSF53067">
    <property type="entry name" value="Actin-like ATPase domain"/>
    <property type="match status" value="1"/>
</dbReference>
<comment type="function">
    <text evidence="1">Required for the formation of a threonylcarbamoyl group on adenosine at position 37 (t(6)A37) in tRNAs that read codons beginning with adenine. Is involved in the transfer of the threonylcarbamoyl moiety of threonylcarbamoyl-AMP (TC-AMP) to the N6 group of A37, together with TsaE and TsaB. TsaD likely plays a direct catalytic role in this reaction.</text>
</comment>
<comment type="catalytic activity">
    <reaction evidence="1">
        <text>L-threonylcarbamoyladenylate + adenosine(37) in tRNA = N(6)-L-threonylcarbamoyladenosine(37) in tRNA + AMP + H(+)</text>
        <dbReference type="Rhea" id="RHEA:37059"/>
        <dbReference type="Rhea" id="RHEA-COMP:10162"/>
        <dbReference type="Rhea" id="RHEA-COMP:10163"/>
        <dbReference type="ChEBI" id="CHEBI:15378"/>
        <dbReference type="ChEBI" id="CHEBI:73682"/>
        <dbReference type="ChEBI" id="CHEBI:74411"/>
        <dbReference type="ChEBI" id="CHEBI:74418"/>
        <dbReference type="ChEBI" id="CHEBI:456215"/>
        <dbReference type="EC" id="2.3.1.234"/>
    </reaction>
</comment>
<comment type="cofactor">
    <cofactor evidence="1">
        <name>Fe(2+)</name>
        <dbReference type="ChEBI" id="CHEBI:29033"/>
    </cofactor>
    <text evidence="1">Binds 1 Fe(2+) ion per subunit.</text>
</comment>
<comment type="subcellular location">
    <subcellularLocation>
        <location evidence="1">Cytoplasm</location>
    </subcellularLocation>
</comment>
<comment type="similarity">
    <text evidence="1">Belongs to the KAE1 / TsaD family.</text>
</comment>